<sequence>MAGHSQFKNIMHRKGAQDAKRAKQFAKVLREITVATRSGLPDPTSNPRLRAAISMAREVNMPKDNVERAIKKASGAAGGDDYVEVRYEGYGPAGVAIIVEGLTDNRNRTAGEVRAAFSKHGGSLGETNSVSFMFQRLGVISYPLDVASEDEMLEAAIEAGADNAETTEEGHEVTCAMENFFAVRDALESRFGEPQSAKLDWRPENSVTLDEDKARSVMKLIDVLEDSDDIQAVYANFDIPDDVAEALAA</sequence>
<feature type="chain" id="PRO_0000175816" description="Probable transcriptional regulatory protein GOX1679">
    <location>
        <begin position="1"/>
        <end position="249"/>
    </location>
</feature>
<protein>
    <recommendedName>
        <fullName evidence="1">Probable transcriptional regulatory protein GOX1679</fullName>
    </recommendedName>
</protein>
<dbReference type="EMBL" id="CP000009">
    <property type="protein sequence ID" value="AAW61419.1"/>
    <property type="molecule type" value="Genomic_DNA"/>
</dbReference>
<dbReference type="RefSeq" id="WP_011253201.1">
    <property type="nucleotide sequence ID" value="NC_006677.1"/>
</dbReference>
<dbReference type="SMR" id="Q5FQC7"/>
<dbReference type="STRING" id="290633.GOX1679"/>
<dbReference type="KEGG" id="gox:GOX1679"/>
<dbReference type="eggNOG" id="COG0217">
    <property type="taxonomic scope" value="Bacteria"/>
</dbReference>
<dbReference type="HOGENOM" id="CLU_062974_2_2_5"/>
<dbReference type="Proteomes" id="UP000006375">
    <property type="component" value="Chromosome"/>
</dbReference>
<dbReference type="GO" id="GO:0005829">
    <property type="term" value="C:cytosol"/>
    <property type="evidence" value="ECO:0007669"/>
    <property type="project" value="TreeGrafter"/>
</dbReference>
<dbReference type="GO" id="GO:0003677">
    <property type="term" value="F:DNA binding"/>
    <property type="evidence" value="ECO:0007669"/>
    <property type="project" value="UniProtKB-UniRule"/>
</dbReference>
<dbReference type="GO" id="GO:0006355">
    <property type="term" value="P:regulation of DNA-templated transcription"/>
    <property type="evidence" value="ECO:0007669"/>
    <property type="project" value="UniProtKB-UniRule"/>
</dbReference>
<dbReference type="FunFam" id="1.10.10.200:FF:000002">
    <property type="entry name" value="Probable transcriptional regulatory protein CLM62_37755"/>
    <property type="match status" value="1"/>
</dbReference>
<dbReference type="Gene3D" id="1.10.10.200">
    <property type="match status" value="1"/>
</dbReference>
<dbReference type="Gene3D" id="3.30.70.980">
    <property type="match status" value="2"/>
</dbReference>
<dbReference type="HAMAP" id="MF_00693">
    <property type="entry name" value="Transcrip_reg_TACO1"/>
    <property type="match status" value="1"/>
</dbReference>
<dbReference type="InterPro" id="IPR017856">
    <property type="entry name" value="Integrase-like_N"/>
</dbReference>
<dbReference type="InterPro" id="IPR048300">
    <property type="entry name" value="TACO1_YebC-like_2nd/3rd_dom"/>
</dbReference>
<dbReference type="InterPro" id="IPR049083">
    <property type="entry name" value="TACO1_YebC_N"/>
</dbReference>
<dbReference type="InterPro" id="IPR002876">
    <property type="entry name" value="Transcrip_reg_TACO1-like"/>
</dbReference>
<dbReference type="InterPro" id="IPR026564">
    <property type="entry name" value="Transcrip_reg_TACO1-like_dom3"/>
</dbReference>
<dbReference type="InterPro" id="IPR029072">
    <property type="entry name" value="YebC-like"/>
</dbReference>
<dbReference type="NCBIfam" id="NF001030">
    <property type="entry name" value="PRK00110.1"/>
    <property type="match status" value="1"/>
</dbReference>
<dbReference type="NCBIfam" id="NF009044">
    <property type="entry name" value="PRK12378.1"/>
    <property type="match status" value="1"/>
</dbReference>
<dbReference type="NCBIfam" id="TIGR01033">
    <property type="entry name" value="YebC/PmpR family DNA-binding transcriptional regulator"/>
    <property type="match status" value="1"/>
</dbReference>
<dbReference type="PANTHER" id="PTHR12532:SF6">
    <property type="entry name" value="TRANSCRIPTIONAL REGULATORY PROTEIN YEBC-RELATED"/>
    <property type="match status" value="1"/>
</dbReference>
<dbReference type="PANTHER" id="PTHR12532">
    <property type="entry name" value="TRANSLATIONAL ACTIVATOR OF CYTOCHROME C OXIDASE 1"/>
    <property type="match status" value="1"/>
</dbReference>
<dbReference type="Pfam" id="PF20772">
    <property type="entry name" value="TACO1_YebC_N"/>
    <property type="match status" value="1"/>
</dbReference>
<dbReference type="Pfam" id="PF01709">
    <property type="entry name" value="Transcrip_reg"/>
    <property type="match status" value="1"/>
</dbReference>
<dbReference type="SUPFAM" id="SSF75625">
    <property type="entry name" value="YebC-like"/>
    <property type="match status" value="1"/>
</dbReference>
<proteinExistence type="inferred from homology"/>
<accession>Q5FQC7</accession>
<reference key="1">
    <citation type="journal article" date="2005" name="Nat. Biotechnol.">
        <title>Complete genome sequence of the acetic acid bacterium Gluconobacter oxydans.</title>
        <authorList>
            <person name="Prust C."/>
            <person name="Hoffmeister M."/>
            <person name="Liesegang H."/>
            <person name="Wiezer A."/>
            <person name="Fricke W.F."/>
            <person name="Ehrenreich A."/>
            <person name="Gottschalk G."/>
            <person name="Deppenmeier U."/>
        </authorList>
    </citation>
    <scope>NUCLEOTIDE SEQUENCE [LARGE SCALE GENOMIC DNA]</scope>
    <source>
        <strain>621H</strain>
    </source>
</reference>
<organism>
    <name type="scientific">Gluconobacter oxydans (strain 621H)</name>
    <name type="common">Gluconobacter suboxydans</name>
    <dbReference type="NCBI Taxonomy" id="290633"/>
    <lineage>
        <taxon>Bacteria</taxon>
        <taxon>Pseudomonadati</taxon>
        <taxon>Pseudomonadota</taxon>
        <taxon>Alphaproteobacteria</taxon>
        <taxon>Acetobacterales</taxon>
        <taxon>Acetobacteraceae</taxon>
        <taxon>Gluconobacter</taxon>
    </lineage>
</organism>
<name>Y1679_GLUOX</name>
<keyword id="KW-0963">Cytoplasm</keyword>
<keyword id="KW-0238">DNA-binding</keyword>
<keyword id="KW-1185">Reference proteome</keyword>
<keyword id="KW-0804">Transcription</keyword>
<keyword id="KW-0805">Transcription regulation</keyword>
<gene>
    <name type="ordered locus">GOX1679</name>
</gene>
<comment type="subcellular location">
    <subcellularLocation>
        <location evidence="1">Cytoplasm</location>
    </subcellularLocation>
</comment>
<comment type="similarity">
    <text evidence="1">Belongs to the TACO1 family.</text>
</comment>
<evidence type="ECO:0000255" key="1">
    <source>
        <dbReference type="HAMAP-Rule" id="MF_00693"/>
    </source>
</evidence>